<accession>A3NCQ2</accession>
<comment type="function">
    <text evidence="1">Could be a nuclease involved in processing of the 5'-end of pre-16S rRNA.</text>
</comment>
<comment type="subcellular location">
    <subcellularLocation>
        <location evidence="1">Cytoplasm</location>
    </subcellularLocation>
</comment>
<comment type="similarity">
    <text evidence="1">Belongs to the YqgF nuclease family.</text>
</comment>
<proteinExistence type="inferred from homology"/>
<gene>
    <name type="ordered locus">BURPS668_3111</name>
</gene>
<organism>
    <name type="scientific">Burkholderia pseudomallei (strain 668)</name>
    <dbReference type="NCBI Taxonomy" id="320373"/>
    <lineage>
        <taxon>Bacteria</taxon>
        <taxon>Pseudomonadati</taxon>
        <taxon>Pseudomonadota</taxon>
        <taxon>Betaproteobacteria</taxon>
        <taxon>Burkholderiales</taxon>
        <taxon>Burkholderiaceae</taxon>
        <taxon>Burkholderia</taxon>
        <taxon>pseudomallei group</taxon>
    </lineage>
</organism>
<name>YQGF_BURP6</name>
<evidence type="ECO:0000255" key="1">
    <source>
        <dbReference type="HAMAP-Rule" id="MF_00651"/>
    </source>
</evidence>
<protein>
    <recommendedName>
        <fullName evidence="1">Putative pre-16S rRNA nuclease</fullName>
        <ecNumber evidence="1">3.1.-.-</ecNumber>
    </recommendedName>
</protein>
<feature type="chain" id="PRO_1000061497" description="Putative pre-16S rRNA nuclease">
    <location>
        <begin position="1"/>
        <end position="146"/>
    </location>
</feature>
<keyword id="KW-0963">Cytoplasm</keyword>
<keyword id="KW-0378">Hydrolase</keyword>
<keyword id="KW-0540">Nuclease</keyword>
<keyword id="KW-0690">Ribosome biogenesis</keyword>
<dbReference type="EC" id="3.1.-.-" evidence="1"/>
<dbReference type="EMBL" id="CP000570">
    <property type="protein sequence ID" value="ABN84994.1"/>
    <property type="molecule type" value="Genomic_DNA"/>
</dbReference>
<dbReference type="SMR" id="A3NCQ2"/>
<dbReference type="KEGG" id="bpd:BURPS668_3111"/>
<dbReference type="HOGENOM" id="CLU_098240_3_2_4"/>
<dbReference type="GO" id="GO:0005829">
    <property type="term" value="C:cytosol"/>
    <property type="evidence" value="ECO:0007669"/>
    <property type="project" value="TreeGrafter"/>
</dbReference>
<dbReference type="GO" id="GO:0004518">
    <property type="term" value="F:nuclease activity"/>
    <property type="evidence" value="ECO:0007669"/>
    <property type="project" value="UniProtKB-KW"/>
</dbReference>
<dbReference type="GO" id="GO:0000967">
    <property type="term" value="P:rRNA 5'-end processing"/>
    <property type="evidence" value="ECO:0007669"/>
    <property type="project" value="UniProtKB-UniRule"/>
</dbReference>
<dbReference type="CDD" id="cd16964">
    <property type="entry name" value="YqgF"/>
    <property type="match status" value="1"/>
</dbReference>
<dbReference type="Gene3D" id="3.30.420.140">
    <property type="entry name" value="YqgF/RNase H-like domain"/>
    <property type="match status" value="1"/>
</dbReference>
<dbReference type="HAMAP" id="MF_00651">
    <property type="entry name" value="Nuclease_YqgF"/>
    <property type="match status" value="1"/>
</dbReference>
<dbReference type="InterPro" id="IPR012337">
    <property type="entry name" value="RNaseH-like_sf"/>
</dbReference>
<dbReference type="InterPro" id="IPR005227">
    <property type="entry name" value="YqgF"/>
</dbReference>
<dbReference type="InterPro" id="IPR006641">
    <property type="entry name" value="YqgF/RNaseH-like_dom"/>
</dbReference>
<dbReference type="InterPro" id="IPR037027">
    <property type="entry name" value="YqgF/RNaseH-like_dom_sf"/>
</dbReference>
<dbReference type="NCBIfam" id="TIGR00250">
    <property type="entry name" value="RNAse_H_YqgF"/>
    <property type="match status" value="1"/>
</dbReference>
<dbReference type="PANTHER" id="PTHR33317">
    <property type="entry name" value="POLYNUCLEOTIDYL TRANSFERASE, RIBONUCLEASE H-LIKE SUPERFAMILY PROTEIN"/>
    <property type="match status" value="1"/>
</dbReference>
<dbReference type="PANTHER" id="PTHR33317:SF4">
    <property type="entry name" value="POLYNUCLEOTIDYL TRANSFERASE, RIBONUCLEASE H-LIKE SUPERFAMILY PROTEIN"/>
    <property type="match status" value="1"/>
</dbReference>
<dbReference type="Pfam" id="PF03652">
    <property type="entry name" value="RuvX"/>
    <property type="match status" value="1"/>
</dbReference>
<dbReference type="SMART" id="SM00732">
    <property type="entry name" value="YqgFc"/>
    <property type="match status" value="1"/>
</dbReference>
<dbReference type="SUPFAM" id="SSF53098">
    <property type="entry name" value="Ribonuclease H-like"/>
    <property type="match status" value="1"/>
</dbReference>
<sequence>MSAALSRDATLLAFDYGEKRIGVAVGNLLTRTARALVIVRNLNREHRFKAVGELIAEWKPDALVVGLPLHPDGAPHEMTQRAMRFGNQLNGRFNLPVNWVDERYSSVEARAGLRARGDAADRVDAEAARVILQQYLDGLPDHHEFN</sequence>
<reference key="1">
    <citation type="journal article" date="2010" name="Genome Biol. Evol.">
        <title>Continuing evolution of Burkholderia mallei through genome reduction and large-scale rearrangements.</title>
        <authorList>
            <person name="Losada L."/>
            <person name="Ronning C.M."/>
            <person name="DeShazer D."/>
            <person name="Woods D."/>
            <person name="Fedorova N."/>
            <person name="Kim H.S."/>
            <person name="Shabalina S.A."/>
            <person name="Pearson T.R."/>
            <person name="Brinkac L."/>
            <person name="Tan P."/>
            <person name="Nandi T."/>
            <person name="Crabtree J."/>
            <person name="Badger J."/>
            <person name="Beckstrom-Sternberg S."/>
            <person name="Saqib M."/>
            <person name="Schutzer S.E."/>
            <person name="Keim P."/>
            <person name="Nierman W.C."/>
        </authorList>
    </citation>
    <scope>NUCLEOTIDE SEQUENCE [LARGE SCALE GENOMIC DNA]</scope>
    <source>
        <strain>668</strain>
    </source>
</reference>